<keyword id="KW-1185">Reference proteome</keyword>
<keyword id="KW-0749">Sporulation</keyword>
<gene>
    <name evidence="1" type="primary">sspP</name>
    <name type="ordered locus">BC_3620</name>
</gene>
<name>SSPP_BACCR</name>
<reference key="1">
    <citation type="journal article" date="2003" name="Nature">
        <title>Genome sequence of Bacillus cereus and comparative analysis with Bacillus anthracis.</title>
        <authorList>
            <person name="Ivanova N."/>
            <person name="Sorokin A."/>
            <person name="Anderson I."/>
            <person name="Galleron N."/>
            <person name="Candelon B."/>
            <person name="Kapatral V."/>
            <person name="Bhattacharyya A."/>
            <person name="Reznik G."/>
            <person name="Mikhailova N."/>
            <person name="Lapidus A."/>
            <person name="Chu L."/>
            <person name="Mazur M."/>
            <person name="Goltsman E."/>
            <person name="Larsen N."/>
            <person name="D'Souza M."/>
            <person name="Walunas T."/>
            <person name="Grechkin Y."/>
            <person name="Pusch G."/>
            <person name="Haselkorn R."/>
            <person name="Fonstein M."/>
            <person name="Ehrlich S.D."/>
            <person name="Overbeek R."/>
            <person name="Kyrpides N.C."/>
        </authorList>
    </citation>
    <scope>NUCLEOTIDE SEQUENCE [LARGE SCALE GENOMIC DNA]</scope>
    <source>
        <strain>ATCC 14579 / DSM 31 / CCUG 7414 / JCM 2152 / NBRC 15305 / NCIMB 9373 / NCTC 2599 / NRRL B-3711</strain>
    </source>
</reference>
<proteinExistence type="inferred from homology"/>
<protein>
    <recommendedName>
        <fullName evidence="1">Small, acid-soluble spore protein P</fullName>
        <shortName evidence="1">SASP P</shortName>
    </recommendedName>
</protein>
<dbReference type="EMBL" id="AE016877">
    <property type="protein sequence ID" value="AAP10551.1"/>
    <property type="molecule type" value="Genomic_DNA"/>
</dbReference>
<dbReference type="RefSeq" id="NP_833350.1">
    <property type="nucleotide sequence ID" value="NC_004722.1"/>
</dbReference>
<dbReference type="STRING" id="226900.BC_3620"/>
<dbReference type="KEGG" id="bce:BC3620"/>
<dbReference type="PATRIC" id="fig|226900.8.peg.3718"/>
<dbReference type="HOGENOM" id="CLU_210130_0_0_9"/>
<dbReference type="Proteomes" id="UP000001417">
    <property type="component" value="Chromosome"/>
</dbReference>
<dbReference type="GO" id="GO:0030436">
    <property type="term" value="P:asexual sporulation"/>
    <property type="evidence" value="ECO:0007669"/>
    <property type="project" value="UniProtKB-UniRule"/>
</dbReference>
<dbReference type="GO" id="GO:0030435">
    <property type="term" value="P:sporulation resulting in formation of a cellular spore"/>
    <property type="evidence" value="ECO:0007669"/>
    <property type="project" value="UniProtKB-KW"/>
</dbReference>
<dbReference type="HAMAP" id="MF_00666">
    <property type="entry name" value="SspP"/>
    <property type="match status" value="1"/>
</dbReference>
<dbReference type="InterPro" id="IPR012614">
    <property type="entry name" value="SASP_SspP"/>
</dbReference>
<dbReference type="NCBIfam" id="NF006905">
    <property type="entry name" value="PRK09399.1"/>
    <property type="match status" value="1"/>
</dbReference>
<dbReference type="Pfam" id="PF08179">
    <property type="entry name" value="SspP"/>
    <property type="match status" value="1"/>
</dbReference>
<organism>
    <name type="scientific">Bacillus cereus (strain ATCC 14579 / DSM 31 / CCUG 7414 / JCM 2152 / NBRC 15305 / NCIMB 9373 / NCTC 2599 / NRRL B-3711)</name>
    <dbReference type="NCBI Taxonomy" id="226900"/>
    <lineage>
        <taxon>Bacteria</taxon>
        <taxon>Bacillati</taxon>
        <taxon>Bacillota</taxon>
        <taxon>Bacilli</taxon>
        <taxon>Bacillales</taxon>
        <taxon>Bacillaceae</taxon>
        <taxon>Bacillus</taxon>
        <taxon>Bacillus cereus group</taxon>
    </lineage>
</organism>
<comment type="subcellular location">
    <subcellularLocation>
        <location evidence="1">Spore core</location>
    </subcellularLocation>
</comment>
<comment type="induction">
    <text evidence="1">Expressed only in the forespore compartment of sporulating cells.</text>
</comment>
<comment type="similarity">
    <text evidence="1">Belongs to the SspP family.</text>
</comment>
<feature type="chain" id="PRO_0000217211" description="Small, acid-soluble spore protein P">
    <location>
        <begin position="1"/>
        <end position="44"/>
    </location>
</feature>
<feature type="region of interest" description="Disordered" evidence="2">
    <location>
        <begin position="1"/>
        <end position="44"/>
    </location>
</feature>
<feature type="compositionally biased region" description="Basic and acidic residues" evidence="2">
    <location>
        <begin position="8"/>
        <end position="18"/>
    </location>
</feature>
<feature type="compositionally biased region" description="Basic residues" evidence="2">
    <location>
        <begin position="26"/>
        <end position="44"/>
    </location>
</feature>
<evidence type="ECO:0000255" key="1">
    <source>
        <dbReference type="HAMAP-Rule" id="MF_00666"/>
    </source>
</evidence>
<evidence type="ECO:0000256" key="2">
    <source>
        <dbReference type="SAM" id="MobiDB-lite"/>
    </source>
</evidence>
<sequence>MSHTMGKNNREAKEKKGQPEPLSGSHKVKNRNHSRQKHHAHHDM</sequence>
<accession>Q81AF2</accession>